<comment type="function">
    <text evidence="1">Catalyzes the formation of N(4)-acetylcytidine (ac(4)C) at the wobble position of tRNA(Met), by using acetyl-CoA as an acetyl donor and ATP (or GTP).</text>
</comment>
<comment type="catalytic activity">
    <reaction evidence="1">
        <text>cytidine(34) in elongator tRNA(Met) + acetyl-CoA + ATP + H2O = N(4)-acetylcytidine(34) in elongator tRNA(Met) + ADP + phosphate + CoA + H(+)</text>
        <dbReference type="Rhea" id="RHEA:43788"/>
        <dbReference type="Rhea" id="RHEA-COMP:10693"/>
        <dbReference type="Rhea" id="RHEA-COMP:10694"/>
        <dbReference type="ChEBI" id="CHEBI:15377"/>
        <dbReference type="ChEBI" id="CHEBI:15378"/>
        <dbReference type="ChEBI" id="CHEBI:30616"/>
        <dbReference type="ChEBI" id="CHEBI:43474"/>
        <dbReference type="ChEBI" id="CHEBI:57287"/>
        <dbReference type="ChEBI" id="CHEBI:57288"/>
        <dbReference type="ChEBI" id="CHEBI:74900"/>
        <dbReference type="ChEBI" id="CHEBI:82748"/>
        <dbReference type="ChEBI" id="CHEBI:456216"/>
        <dbReference type="EC" id="2.3.1.193"/>
    </reaction>
</comment>
<comment type="subcellular location">
    <subcellularLocation>
        <location evidence="1">Cytoplasm</location>
    </subcellularLocation>
</comment>
<comment type="similarity">
    <text evidence="1">Belongs to the RNA cytidine acetyltransferase family. TmcA subfamily.</text>
</comment>
<keyword id="KW-0012">Acyltransferase</keyword>
<keyword id="KW-0067">ATP-binding</keyword>
<keyword id="KW-0963">Cytoplasm</keyword>
<keyword id="KW-0547">Nucleotide-binding</keyword>
<keyword id="KW-0694">RNA-binding</keyword>
<keyword id="KW-0808">Transferase</keyword>
<keyword id="KW-0819">tRNA processing</keyword>
<keyword id="KW-0820">tRNA-binding</keyword>
<feature type="chain" id="PRO_0000403133" description="tRNA(Met) cytidine acetyltransferase TmcA">
    <location>
        <begin position="1"/>
        <end position="743"/>
    </location>
</feature>
<feature type="domain" description="N-acetyltransferase" evidence="1">
    <location>
        <begin position="420"/>
        <end position="604"/>
    </location>
</feature>
<feature type="binding site" evidence="1">
    <location>
        <position position="216"/>
    </location>
    <ligand>
        <name>ATP</name>
        <dbReference type="ChEBI" id="CHEBI:30616"/>
    </ligand>
</feature>
<feature type="binding site" evidence="1">
    <location>
        <begin position="241"/>
        <end position="250"/>
    </location>
    <ligand>
        <name>ATP</name>
        <dbReference type="ChEBI" id="CHEBI:30616"/>
    </ligand>
</feature>
<feature type="binding site" evidence="1">
    <location>
        <position position="390"/>
    </location>
    <ligand>
        <name>ATP</name>
        <dbReference type="ChEBI" id="CHEBI:30616"/>
    </ligand>
</feature>
<feature type="binding site" evidence="1">
    <location>
        <begin position="531"/>
        <end position="533"/>
    </location>
    <ligand>
        <name>acetyl-CoA</name>
        <dbReference type="ChEBI" id="CHEBI:57288"/>
    </ligand>
</feature>
<feature type="binding site" evidence="1">
    <location>
        <begin position="538"/>
        <end position="544"/>
    </location>
    <ligand>
        <name>acetyl-CoA</name>
        <dbReference type="ChEBI" id="CHEBI:57288"/>
    </ligand>
</feature>
<protein>
    <recommendedName>
        <fullName evidence="1">tRNA(Met) cytidine acetyltransferase TmcA</fullName>
        <ecNumber evidence="1">2.3.1.193</ecNumber>
    </recommendedName>
</protein>
<reference key="1">
    <citation type="journal article" date="2009" name="Proc. Natl. Acad. Sci. U.S.A.">
        <title>Biogeography of the Sulfolobus islandicus pan-genome.</title>
        <authorList>
            <person name="Reno M.L."/>
            <person name="Held N.L."/>
            <person name="Fields C.J."/>
            <person name="Burke P.V."/>
            <person name="Whitaker R.J."/>
        </authorList>
    </citation>
    <scope>NUCLEOTIDE SEQUENCE [LARGE SCALE GENOMIC DNA]</scope>
    <source>
        <strain>Y.G.57.14 / Yellowstone #1</strain>
    </source>
</reference>
<proteinExistence type="inferred from homology"/>
<accession>C3N792</accession>
<gene>
    <name evidence="1" type="primary">tmcA</name>
    <name type="ordered locus">YG5714_1830</name>
</gene>
<name>TMCA_SACI7</name>
<dbReference type="EC" id="2.3.1.193" evidence="1"/>
<dbReference type="EMBL" id="CP001403">
    <property type="protein sequence ID" value="ACP46086.1"/>
    <property type="molecule type" value="Genomic_DNA"/>
</dbReference>
<dbReference type="SMR" id="C3N792"/>
<dbReference type="KEGG" id="siy:YG5714_1830"/>
<dbReference type="HOGENOM" id="CLU_004652_1_0_2"/>
<dbReference type="Proteomes" id="UP000002308">
    <property type="component" value="Chromosome"/>
</dbReference>
<dbReference type="GO" id="GO:0005737">
    <property type="term" value="C:cytoplasm"/>
    <property type="evidence" value="ECO:0007669"/>
    <property type="project" value="UniProtKB-SubCell"/>
</dbReference>
<dbReference type="GO" id="GO:1990883">
    <property type="term" value="F:18S rRNA cytidine N-acetyltransferase activity"/>
    <property type="evidence" value="ECO:0007669"/>
    <property type="project" value="TreeGrafter"/>
</dbReference>
<dbReference type="GO" id="GO:0005524">
    <property type="term" value="F:ATP binding"/>
    <property type="evidence" value="ECO:0007669"/>
    <property type="project" value="UniProtKB-UniRule"/>
</dbReference>
<dbReference type="GO" id="GO:0000049">
    <property type="term" value="F:tRNA binding"/>
    <property type="evidence" value="ECO:0007669"/>
    <property type="project" value="UniProtKB-UniRule"/>
</dbReference>
<dbReference type="GO" id="GO:0051392">
    <property type="term" value="F:tRNA N4-acetyltransferase activity"/>
    <property type="evidence" value="ECO:0007669"/>
    <property type="project" value="UniProtKB-UniRule"/>
</dbReference>
<dbReference type="GO" id="GO:1904812">
    <property type="term" value="P:rRNA acetylation involved in maturation of SSU-rRNA"/>
    <property type="evidence" value="ECO:0007669"/>
    <property type="project" value="TreeGrafter"/>
</dbReference>
<dbReference type="GO" id="GO:0051391">
    <property type="term" value="P:tRNA acetylation"/>
    <property type="evidence" value="ECO:0007669"/>
    <property type="project" value="UniProtKB-UniRule"/>
</dbReference>
<dbReference type="GO" id="GO:0002101">
    <property type="term" value="P:tRNA wobble cytosine modification"/>
    <property type="evidence" value="ECO:0007669"/>
    <property type="project" value="UniProtKB-UniRule"/>
</dbReference>
<dbReference type="CDD" id="cd04301">
    <property type="entry name" value="NAT_SF"/>
    <property type="match status" value="1"/>
</dbReference>
<dbReference type="FunFam" id="3.40.630.30:FF:000140">
    <property type="entry name" value="tRNA(Met) cytidine acetyltransferase TmcA"/>
    <property type="match status" value="1"/>
</dbReference>
<dbReference type="Gene3D" id="3.40.50.11040">
    <property type="match status" value="1"/>
</dbReference>
<dbReference type="Gene3D" id="3.40.630.30">
    <property type="match status" value="1"/>
</dbReference>
<dbReference type="Gene3D" id="3.40.50.300">
    <property type="entry name" value="P-loop containing nucleotide triphosphate hydrolases"/>
    <property type="match status" value="1"/>
</dbReference>
<dbReference type="HAMAP" id="MF_01886">
    <property type="entry name" value="tRNA_acetyltr_TmcA"/>
    <property type="match status" value="1"/>
</dbReference>
<dbReference type="InterPro" id="IPR016181">
    <property type="entry name" value="Acyl_CoA_acyltransferase"/>
</dbReference>
<dbReference type="InterPro" id="IPR000182">
    <property type="entry name" value="GNAT_dom"/>
</dbReference>
<dbReference type="InterPro" id="IPR007807">
    <property type="entry name" value="NAT10/TcmA_helicase"/>
</dbReference>
<dbReference type="InterPro" id="IPR027417">
    <property type="entry name" value="P-loop_NTPase"/>
</dbReference>
<dbReference type="InterPro" id="IPR032672">
    <property type="entry name" value="TmcA/NAT10/Kre33"/>
</dbReference>
<dbReference type="InterPro" id="IPR013562">
    <property type="entry name" value="TmcA_N"/>
</dbReference>
<dbReference type="InterPro" id="IPR024914">
    <property type="entry name" value="tRNA_acetyltr_TmcA"/>
</dbReference>
<dbReference type="PANTHER" id="PTHR10925">
    <property type="entry name" value="N-ACETYLTRANSFERASE 10"/>
    <property type="match status" value="1"/>
</dbReference>
<dbReference type="PANTHER" id="PTHR10925:SF5">
    <property type="entry name" value="RNA CYTIDINE ACETYLTRANSFERASE"/>
    <property type="match status" value="1"/>
</dbReference>
<dbReference type="Pfam" id="PF13718">
    <property type="entry name" value="GNAT_acetyltr_2"/>
    <property type="match status" value="1"/>
</dbReference>
<dbReference type="Pfam" id="PF05127">
    <property type="entry name" value="NAT10_TcmA_helicase"/>
    <property type="match status" value="1"/>
</dbReference>
<dbReference type="Pfam" id="PF08351">
    <property type="entry name" value="TmcA_N"/>
    <property type="match status" value="1"/>
</dbReference>
<dbReference type="SUPFAM" id="SSF55729">
    <property type="entry name" value="Acyl-CoA N-acyltransferases (Nat)"/>
    <property type="match status" value="1"/>
</dbReference>
<dbReference type="SUPFAM" id="SSF52540">
    <property type="entry name" value="P-loop containing nucleoside triphosphate hydrolases"/>
    <property type="match status" value="1"/>
</dbReference>
<dbReference type="PROSITE" id="PS51186">
    <property type="entry name" value="GNAT"/>
    <property type="match status" value="1"/>
</dbReference>
<sequence length="743" mass="84840">MIPGSNPGGRIHNVVKMFQSYFMDAVNGYYRHLAIIESQDYLEKVNSLVEEYLEVNKKPRVIYGFHPWLDNSKDRMIEFRKKFENFLDIDYSNSEKYLGQSVDLVILDAIGDFRPNYIARFVDMTKGGGMAIIYSDDILRGKLYKESLTRDGVVKDLFERRFMELAKRYRGIIFLQGDRLTFTPYSSNETHKSHKKIPKSPKVPMQLHELCLSSDQNKVLEESLFITSPGKRVLVVTAARGRGKSASIGLFLSYLMTEEKFGNILVTSPTYYSSQEIFNFVIKGLDALNVKYKLTTSKDGKIMKITTGESRVKWVSPDLARNEEGDLIVVDEAAAIGMEFLDYILQGWDKTILVTTVHGYEGSGKAFLKYVNRLKSKVLLKHIKMDYPIRYAKGDPIEKFMFDVFLLDAEPAEVMYNGELKIEDVSQEELFQDNNLLKSVYGILVTAHYRNSPDDLMLLGDMAFQKIVVGYSSEKPIAVCQVVSEGDLTDRQIEDISNGLKNEGHLIPHRLIKYMRAFDFGKLKGWRIMRIAVSPENQGKGIGSRIIEEVIKMAKGVDWVGSSFVADYSVLRFWIKNGFTPVYLSSIKNEELNGYSVIVIRALSEKSKGFVVKLSSLLKDKLLRTSHQVYYNLNPQLIALLMRNTYSERRREGEVPDLYVNKIKAYIEGKVPYNVIAETAHFLITKHFLELKVNLSIEAEASLVARVLQGKSWYHAGLMLGLSSREVEERVKQGLEVLLRTYS</sequence>
<evidence type="ECO:0000255" key="1">
    <source>
        <dbReference type="HAMAP-Rule" id="MF_01886"/>
    </source>
</evidence>
<organism>
    <name type="scientific">Saccharolobus islandicus (strain Y.G.57.14 / Yellowstone #1)</name>
    <name type="common">Sulfolobus islandicus</name>
    <dbReference type="NCBI Taxonomy" id="439386"/>
    <lineage>
        <taxon>Archaea</taxon>
        <taxon>Thermoproteota</taxon>
        <taxon>Thermoprotei</taxon>
        <taxon>Sulfolobales</taxon>
        <taxon>Sulfolobaceae</taxon>
        <taxon>Saccharolobus</taxon>
    </lineage>
</organism>